<gene>
    <name evidence="1" type="primary">lolA</name>
    <name type="ordered locus">YPA_0667</name>
</gene>
<reference key="1">
    <citation type="journal article" date="2006" name="J. Bacteriol.">
        <title>Complete genome sequence of Yersinia pestis strains Antiqua and Nepal516: evidence of gene reduction in an emerging pathogen.</title>
        <authorList>
            <person name="Chain P.S.G."/>
            <person name="Hu P."/>
            <person name="Malfatti S.A."/>
            <person name="Radnedge L."/>
            <person name="Larimer F."/>
            <person name="Vergez L.M."/>
            <person name="Worsham P."/>
            <person name="Chu M.C."/>
            <person name="Andersen G.L."/>
        </authorList>
    </citation>
    <scope>NUCLEOTIDE SEQUENCE [LARGE SCALE GENOMIC DNA]</scope>
    <source>
        <strain>Antiqua</strain>
    </source>
</reference>
<name>LOLA_YERPA</name>
<accession>Q1CA87</accession>
<protein>
    <recommendedName>
        <fullName evidence="1">Outer-membrane lipoprotein carrier protein</fullName>
    </recommendedName>
</protein>
<proteinExistence type="inferred from homology"/>
<keyword id="KW-0143">Chaperone</keyword>
<keyword id="KW-0574">Periplasm</keyword>
<keyword id="KW-0653">Protein transport</keyword>
<keyword id="KW-0732">Signal</keyword>
<keyword id="KW-0813">Transport</keyword>
<dbReference type="EMBL" id="CP000308">
    <property type="protein sequence ID" value="ABG12635.1"/>
    <property type="molecule type" value="Genomic_DNA"/>
</dbReference>
<dbReference type="RefSeq" id="WP_002211338.1">
    <property type="nucleotide sequence ID" value="NZ_CP009906.1"/>
</dbReference>
<dbReference type="SMR" id="Q1CA87"/>
<dbReference type="GeneID" id="57977173"/>
<dbReference type="KEGG" id="ypa:YPA_0667"/>
<dbReference type="Proteomes" id="UP000001971">
    <property type="component" value="Chromosome"/>
</dbReference>
<dbReference type="GO" id="GO:0030288">
    <property type="term" value="C:outer membrane-bounded periplasmic space"/>
    <property type="evidence" value="ECO:0007669"/>
    <property type="project" value="TreeGrafter"/>
</dbReference>
<dbReference type="GO" id="GO:0044874">
    <property type="term" value="P:lipoprotein localization to outer membrane"/>
    <property type="evidence" value="ECO:0007669"/>
    <property type="project" value="UniProtKB-UniRule"/>
</dbReference>
<dbReference type="GO" id="GO:0042953">
    <property type="term" value="P:lipoprotein transport"/>
    <property type="evidence" value="ECO:0007669"/>
    <property type="project" value="InterPro"/>
</dbReference>
<dbReference type="CDD" id="cd16325">
    <property type="entry name" value="LolA"/>
    <property type="match status" value="1"/>
</dbReference>
<dbReference type="FunFam" id="2.50.20.10:FF:000001">
    <property type="entry name" value="Outer-membrane lipoprotein carrier protein"/>
    <property type="match status" value="1"/>
</dbReference>
<dbReference type="Gene3D" id="2.50.20.10">
    <property type="entry name" value="Lipoprotein localisation LolA/LolB/LppX"/>
    <property type="match status" value="1"/>
</dbReference>
<dbReference type="HAMAP" id="MF_00240">
    <property type="entry name" value="LolA"/>
    <property type="match status" value="1"/>
</dbReference>
<dbReference type="InterPro" id="IPR029046">
    <property type="entry name" value="LolA/LolB/LppX"/>
</dbReference>
<dbReference type="InterPro" id="IPR004564">
    <property type="entry name" value="OM_lipoprot_carrier_LolA-like"/>
</dbReference>
<dbReference type="InterPro" id="IPR018323">
    <property type="entry name" value="OM_lipoprot_carrier_LolA_Pbac"/>
</dbReference>
<dbReference type="NCBIfam" id="TIGR00547">
    <property type="entry name" value="lolA"/>
    <property type="match status" value="1"/>
</dbReference>
<dbReference type="PANTHER" id="PTHR35869">
    <property type="entry name" value="OUTER-MEMBRANE LIPOPROTEIN CARRIER PROTEIN"/>
    <property type="match status" value="1"/>
</dbReference>
<dbReference type="PANTHER" id="PTHR35869:SF1">
    <property type="entry name" value="OUTER-MEMBRANE LIPOPROTEIN CARRIER PROTEIN"/>
    <property type="match status" value="1"/>
</dbReference>
<dbReference type="Pfam" id="PF03548">
    <property type="entry name" value="LolA"/>
    <property type="match status" value="1"/>
</dbReference>
<dbReference type="SUPFAM" id="SSF89392">
    <property type="entry name" value="Prokaryotic lipoproteins and lipoprotein localization factors"/>
    <property type="match status" value="1"/>
</dbReference>
<comment type="function">
    <text evidence="1">Participates in the translocation of lipoproteins from the inner membrane to the outer membrane. Only forms a complex with a lipoprotein if the residue after the N-terminal Cys is not an aspartate (The Asp acts as a targeting signal to indicate that the lipoprotein should stay in the inner membrane).</text>
</comment>
<comment type="subunit">
    <text evidence="1">Monomer.</text>
</comment>
<comment type="subcellular location">
    <subcellularLocation>
        <location evidence="1">Periplasm</location>
    </subcellularLocation>
</comment>
<comment type="similarity">
    <text evidence="1">Belongs to the LolA family.</text>
</comment>
<evidence type="ECO:0000255" key="1">
    <source>
        <dbReference type="HAMAP-Rule" id="MF_00240"/>
    </source>
</evidence>
<organism>
    <name type="scientific">Yersinia pestis bv. Antiqua (strain Antiqua)</name>
    <dbReference type="NCBI Taxonomy" id="360102"/>
    <lineage>
        <taxon>Bacteria</taxon>
        <taxon>Pseudomonadati</taxon>
        <taxon>Pseudomonadota</taxon>
        <taxon>Gammaproteobacteria</taxon>
        <taxon>Enterobacterales</taxon>
        <taxon>Yersiniaceae</taxon>
        <taxon>Yersinia</taxon>
    </lineage>
</organism>
<feature type="signal peptide" evidence="1">
    <location>
        <begin position="1"/>
        <end position="21"/>
    </location>
</feature>
<feature type="chain" id="PRO_5000115817" description="Outer-membrane lipoprotein carrier protein">
    <location>
        <begin position="22"/>
        <end position="202"/>
    </location>
</feature>
<sequence>MKRLLVACCFLSGLISASALADASTDLQNRLSKVNSFHASFSQAVTSSDGAVVQEGEGELWVKRPNLFNWHMTSPDESVLISDGETLWFYNPFVEQATATWLKNATGNTPFMLITRNNPDDWKQYNVKQKGDDFELTPKSASGNLKQFAISVTPSGTIKSFTAVEQDGQRSAYTLKSQQSSVVDASKFTFTPPKGVTLDDQR</sequence>